<dbReference type="EMBL" id="AE000782">
    <property type="protein sequence ID" value="AAB90139.1"/>
    <property type="molecule type" value="Genomic_DNA"/>
</dbReference>
<dbReference type="PIR" id="G69389">
    <property type="entry name" value="G69389"/>
</dbReference>
<dbReference type="SMR" id="O29145"/>
<dbReference type="STRING" id="224325.AF_1120"/>
<dbReference type="PaxDb" id="224325-AF_1120"/>
<dbReference type="EnsemblBacteria" id="AAB90139">
    <property type="protein sequence ID" value="AAB90139"/>
    <property type="gene ID" value="AF_1120"/>
</dbReference>
<dbReference type="KEGG" id="afu:AF_1120"/>
<dbReference type="eggNOG" id="arCOG02201">
    <property type="taxonomic scope" value="Archaea"/>
</dbReference>
<dbReference type="HOGENOM" id="CLU_1607055_0_0_2"/>
<dbReference type="Proteomes" id="UP000002199">
    <property type="component" value="Chromosome"/>
</dbReference>
<dbReference type="Gene3D" id="3.40.50.1440">
    <property type="entry name" value="Tubulin/FtsZ, GTPase domain"/>
    <property type="match status" value="1"/>
</dbReference>
<dbReference type="InterPro" id="IPR036525">
    <property type="entry name" value="Tubulin/FtsZ_GTPase_sf"/>
</dbReference>
<dbReference type="SUPFAM" id="SSF52490">
    <property type="entry name" value="Tubulin nucleotide-binding domain-like"/>
    <property type="match status" value="1"/>
</dbReference>
<sequence length="170" mass="19318">MRRWGMAKIAVVSLGGAGTSIMREMLGIASDFDAYNVNERRTLKNARYFGYEEMEALAEELSGYDCIIFTAGLGSRSGDALVDLYGMLDGVRRLCFLVTPFYFEIERLMRSRAQLGKIMTEDFEGAVLTLNSLLRDMEEAEPSKSKLEKLVRRFDREVASLIVEMMQEVR</sequence>
<proteinExistence type="predicted"/>
<name>Y1120_ARCFU</name>
<keyword id="KW-1185">Reference proteome</keyword>
<accession>O29145</accession>
<feature type="chain" id="PRO_0000127966" description="Uncharacterized protein AF_1120">
    <location>
        <begin position="1"/>
        <end position="170"/>
    </location>
</feature>
<reference key="1">
    <citation type="journal article" date="1997" name="Nature">
        <title>The complete genome sequence of the hyperthermophilic, sulphate-reducing archaeon Archaeoglobus fulgidus.</title>
        <authorList>
            <person name="Klenk H.-P."/>
            <person name="Clayton R.A."/>
            <person name="Tomb J.-F."/>
            <person name="White O."/>
            <person name="Nelson K.E."/>
            <person name="Ketchum K.A."/>
            <person name="Dodson R.J."/>
            <person name="Gwinn M.L."/>
            <person name="Hickey E.K."/>
            <person name="Peterson J.D."/>
            <person name="Richardson D.L."/>
            <person name="Kerlavage A.R."/>
            <person name="Graham D.E."/>
            <person name="Kyrpides N.C."/>
            <person name="Fleischmann R.D."/>
            <person name="Quackenbush J."/>
            <person name="Lee N.H."/>
            <person name="Sutton G.G."/>
            <person name="Gill S.R."/>
            <person name="Kirkness E.F."/>
            <person name="Dougherty B.A."/>
            <person name="McKenney K."/>
            <person name="Adams M.D."/>
            <person name="Loftus B.J."/>
            <person name="Peterson S.N."/>
            <person name="Reich C.I."/>
            <person name="McNeil L.K."/>
            <person name="Badger J.H."/>
            <person name="Glodek A."/>
            <person name="Zhou L."/>
            <person name="Overbeek R."/>
            <person name="Gocayne J.D."/>
            <person name="Weidman J.F."/>
            <person name="McDonald L.A."/>
            <person name="Utterback T.R."/>
            <person name="Cotton M.D."/>
            <person name="Spriggs T."/>
            <person name="Artiach P."/>
            <person name="Kaine B.P."/>
            <person name="Sykes S.M."/>
            <person name="Sadow P.W."/>
            <person name="D'Andrea K.P."/>
            <person name="Bowman C."/>
            <person name="Fujii C."/>
            <person name="Garland S.A."/>
            <person name="Mason T.M."/>
            <person name="Olsen G.J."/>
            <person name="Fraser C.M."/>
            <person name="Smith H.O."/>
            <person name="Woese C.R."/>
            <person name="Venter J.C."/>
        </authorList>
    </citation>
    <scope>NUCLEOTIDE SEQUENCE [LARGE SCALE GENOMIC DNA]</scope>
    <source>
        <strain>ATCC 49558 / DSM 4304 / JCM 9628 / NBRC 100126 / VC-16</strain>
    </source>
</reference>
<protein>
    <recommendedName>
        <fullName>Uncharacterized protein AF_1120</fullName>
    </recommendedName>
</protein>
<organism>
    <name type="scientific">Archaeoglobus fulgidus (strain ATCC 49558 / DSM 4304 / JCM 9628 / NBRC 100126 / VC-16)</name>
    <dbReference type="NCBI Taxonomy" id="224325"/>
    <lineage>
        <taxon>Archaea</taxon>
        <taxon>Methanobacteriati</taxon>
        <taxon>Methanobacteriota</taxon>
        <taxon>Archaeoglobi</taxon>
        <taxon>Archaeoglobales</taxon>
        <taxon>Archaeoglobaceae</taxon>
        <taxon>Archaeoglobus</taxon>
    </lineage>
</organism>
<gene>
    <name type="ordered locus">AF_1120</name>
</gene>